<feature type="chain" id="PRO_1000004542" description="Translation initiation factor IF-3">
    <location>
        <begin position="1"/>
        <end position="179"/>
    </location>
</feature>
<name>IF3_LEPBL</name>
<evidence type="ECO:0000255" key="1">
    <source>
        <dbReference type="HAMAP-Rule" id="MF_00080"/>
    </source>
</evidence>
<protein>
    <recommendedName>
        <fullName evidence="1">Translation initiation factor IF-3</fullName>
    </recommendedName>
</protein>
<proteinExistence type="inferred from homology"/>
<organism>
    <name type="scientific">Leptospira borgpetersenii serovar Hardjo-bovis (strain L550)</name>
    <dbReference type="NCBI Taxonomy" id="355276"/>
    <lineage>
        <taxon>Bacteria</taxon>
        <taxon>Pseudomonadati</taxon>
        <taxon>Spirochaetota</taxon>
        <taxon>Spirochaetia</taxon>
        <taxon>Leptospirales</taxon>
        <taxon>Leptospiraceae</taxon>
        <taxon>Leptospira</taxon>
    </lineage>
</organism>
<comment type="function">
    <text evidence="1">IF-3 binds to the 30S ribosomal subunit and shifts the equilibrium between 70S ribosomes and their 50S and 30S subunits in favor of the free subunits, thus enhancing the availability of 30S subunits on which protein synthesis initiation begins.</text>
</comment>
<comment type="subunit">
    <text evidence="1">Monomer.</text>
</comment>
<comment type="subcellular location">
    <subcellularLocation>
        <location evidence="1">Cytoplasm</location>
    </subcellularLocation>
</comment>
<comment type="similarity">
    <text evidence="1">Belongs to the IF-3 family.</text>
</comment>
<dbReference type="EMBL" id="CP000348">
    <property type="protein sequence ID" value="ABJ79526.1"/>
    <property type="molecule type" value="Genomic_DNA"/>
</dbReference>
<dbReference type="RefSeq" id="WP_002726167.1">
    <property type="nucleotide sequence ID" value="NC_008508.1"/>
</dbReference>
<dbReference type="SMR" id="Q04ZG9"/>
<dbReference type="GeneID" id="61174782"/>
<dbReference type="KEGG" id="lbl:LBL_2113"/>
<dbReference type="HOGENOM" id="CLU_054919_3_2_12"/>
<dbReference type="GO" id="GO:0005829">
    <property type="term" value="C:cytosol"/>
    <property type="evidence" value="ECO:0007669"/>
    <property type="project" value="TreeGrafter"/>
</dbReference>
<dbReference type="GO" id="GO:0016020">
    <property type="term" value="C:membrane"/>
    <property type="evidence" value="ECO:0007669"/>
    <property type="project" value="TreeGrafter"/>
</dbReference>
<dbReference type="GO" id="GO:0043022">
    <property type="term" value="F:ribosome binding"/>
    <property type="evidence" value="ECO:0007669"/>
    <property type="project" value="TreeGrafter"/>
</dbReference>
<dbReference type="GO" id="GO:0003743">
    <property type="term" value="F:translation initiation factor activity"/>
    <property type="evidence" value="ECO:0007669"/>
    <property type="project" value="UniProtKB-UniRule"/>
</dbReference>
<dbReference type="GO" id="GO:0032790">
    <property type="term" value="P:ribosome disassembly"/>
    <property type="evidence" value="ECO:0007669"/>
    <property type="project" value="TreeGrafter"/>
</dbReference>
<dbReference type="FunFam" id="3.30.110.10:FF:000001">
    <property type="entry name" value="Translation initiation factor IF-3"/>
    <property type="match status" value="1"/>
</dbReference>
<dbReference type="Gene3D" id="3.30.110.10">
    <property type="entry name" value="Translation initiation factor 3 (IF-3), C-terminal domain"/>
    <property type="match status" value="1"/>
</dbReference>
<dbReference type="Gene3D" id="3.10.20.80">
    <property type="entry name" value="Translation initiation factor 3 (IF-3), N-terminal domain"/>
    <property type="match status" value="1"/>
</dbReference>
<dbReference type="HAMAP" id="MF_00080">
    <property type="entry name" value="IF_3"/>
    <property type="match status" value="1"/>
</dbReference>
<dbReference type="InterPro" id="IPR036788">
    <property type="entry name" value="T_IF-3_C_sf"/>
</dbReference>
<dbReference type="InterPro" id="IPR036787">
    <property type="entry name" value="T_IF-3_N_sf"/>
</dbReference>
<dbReference type="InterPro" id="IPR019813">
    <property type="entry name" value="Translation_initiation_fac3_CS"/>
</dbReference>
<dbReference type="InterPro" id="IPR001288">
    <property type="entry name" value="Translation_initiation_fac_3"/>
</dbReference>
<dbReference type="InterPro" id="IPR019815">
    <property type="entry name" value="Translation_initiation_fac_3_C"/>
</dbReference>
<dbReference type="InterPro" id="IPR019814">
    <property type="entry name" value="Translation_initiation_fac_3_N"/>
</dbReference>
<dbReference type="NCBIfam" id="TIGR00168">
    <property type="entry name" value="infC"/>
    <property type="match status" value="1"/>
</dbReference>
<dbReference type="PANTHER" id="PTHR10938">
    <property type="entry name" value="TRANSLATION INITIATION FACTOR IF-3"/>
    <property type="match status" value="1"/>
</dbReference>
<dbReference type="PANTHER" id="PTHR10938:SF0">
    <property type="entry name" value="TRANSLATION INITIATION FACTOR IF-3, MITOCHONDRIAL"/>
    <property type="match status" value="1"/>
</dbReference>
<dbReference type="Pfam" id="PF00707">
    <property type="entry name" value="IF3_C"/>
    <property type="match status" value="1"/>
</dbReference>
<dbReference type="Pfam" id="PF05198">
    <property type="entry name" value="IF3_N"/>
    <property type="match status" value="1"/>
</dbReference>
<dbReference type="SUPFAM" id="SSF55200">
    <property type="entry name" value="Translation initiation factor IF3, C-terminal domain"/>
    <property type="match status" value="1"/>
</dbReference>
<dbReference type="SUPFAM" id="SSF54364">
    <property type="entry name" value="Translation initiation factor IF3, N-terminal domain"/>
    <property type="match status" value="1"/>
</dbReference>
<dbReference type="PROSITE" id="PS00938">
    <property type="entry name" value="IF3"/>
    <property type="match status" value="1"/>
</dbReference>
<reference key="1">
    <citation type="journal article" date="2006" name="Proc. Natl. Acad. Sci. U.S.A.">
        <title>Genome reduction in Leptospira borgpetersenii reflects limited transmission potential.</title>
        <authorList>
            <person name="Bulach D.M."/>
            <person name="Zuerner R.L."/>
            <person name="Wilson P."/>
            <person name="Seemann T."/>
            <person name="McGrath A."/>
            <person name="Cullen P.A."/>
            <person name="Davis J."/>
            <person name="Johnson M."/>
            <person name="Kuczek E."/>
            <person name="Alt D.P."/>
            <person name="Peterson-Burch B."/>
            <person name="Coppel R.L."/>
            <person name="Rood J.I."/>
            <person name="Davies J.K."/>
            <person name="Adler B."/>
        </authorList>
    </citation>
    <scope>NUCLEOTIDE SEQUENCE [LARGE SCALE GENOMIC DNA]</scope>
    <source>
        <strain>L550</strain>
    </source>
</reference>
<accession>Q04ZG9</accession>
<sequence>MQRKPSQKSATDKLFNHRINEKITGVSRVRLVSDDGVAIVSFEEALRKAKEENLDLVEVSADQELHVCKIIDYGKYKFELLKKNKEAKKKQHVINVKEIKIRPRIESHDYEIKKKHAQEFLGKGDKVKVSLRFRGREMMHSDLGMKVVYRMIEDLKEYGLAERDPIQDGKQIVVIINPK</sequence>
<keyword id="KW-0963">Cytoplasm</keyword>
<keyword id="KW-0396">Initiation factor</keyword>
<keyword id="KW-0648">Protein biosynthesis</keyword>
<gene>
    <name evidence="1" type="primary">infC</name>
    <name type="ordered locus">LBL_2113</name>
</gene>